<evidence type="ECO:0000255" key="1">
    <source>
        <dbReference type="HAMAP-Rule" id="MF_00344"/>
    </source>
</evidence>
<keyword id="KW-0067">ATP-binding</keyword>
<keyword id="KW-0315">Glutamine amidotransferase</keyword>
<keyword id="KW-0332">GMP biosynthesis</keyword>
<keyword id="KW-0436">Ligase</keyword>
<keyword id="KW-0547">Nucleotide-binding</keyword>
<keyword id="KW-0658">Purine biosynthesis</keyword>
<protein>
    <recommendedName>
        <fullName evidence="1">GMP synthase [glutamine-hydrolyzing]</fullName>
        <ecNumber evidence="1">6.3.5.2</ecNumber>
    </recommendedName>
    <alternativeName>
        <fullName evidence="1">GMP synthetase</fullName>
    </alternativeName>
    <alternativeName>
        <fullName evidence="1">Glutamine amidotransferase</fullName>
    </alternativeName>
</protein>
<sequence length="516" mass="57642">MTDIHNHKILILDFGSQYTQLIARRVRELGVFCEIFPHDVAADFIKNYQAKGIILSGGPESVYDSDVKAPEIVFELGVPVLGICYGMQTMVMQHGGEVKGADQSEFGKAIINILNSTNNIFSNMEHEQLVWMSHSDKVTQTGEHFEIIASSTNAPVAAVAHKNKPFFGVQFHPETTHTENGKQIIENFVVNICGCDTLWNIENIIENDIKEIKQKVGTDKVILGLSGGVDSSVVAAILHQAIGDQLTCIFVDTGLLRLNEGDQVMQVFAEHMDINVIRINAKNRFLDALRGICDPEQKRKIIGKLFVDIFDEEAAKIENAKWLAQGTIYSDVIESAGNNQSKAHVIKSHHNVGGLPKEMKLKLLEPLRELFKDEVRKLGLGLGLPYNMLYRHPFPGPGLGVRILGEIKKEYVETLQKADAIFTEELYKHNLYHDVSQAFGVFLPVKSVGVVGDQRRYEYVIALRAVVSIDFMTATWANLPYDFLSLVSNRIVNEVKQVSRVVYDVTGKPPGTIEWE</sequence>
<dbReference type="EC" id="6.3.5.2" evidence="1"/>
<dbReference type="EMBL" id="CP000608">
    <property type="protein sequence ID" value="ABO46767.1"/>
    <property type="molecule type" value="Genomic_DNA"/>
</dbReference>
<dbReference type="RefSeq" id="WP_003026076.1">
    <property type="nucleotide sequence ID" value="NC_009257.1"/>
</dbReference>
<dbReference type="SMR" id="A4IXW6"/>
<dbReference type="MEROPS" id="C26.957"/>
<dbReference type="KEGG" id="ftw:FTW_0926"/>
<dbReference type="HOGENOM" id="CLU_014340_0_5_6"/>
<dbReference type="UniPathway" id="UPA00189">
    <property type="reaction ID" value="UER00296"/>
</dbReference>
<dbReference type="GO" id="GO:0005829">
    <property type="term" value="C:cytosol"/>
    <property type="evidence" value="ECO:0007669"/>
    <property type="project" value="TreeGrafter"/>
</dbReference>
<dbReference type="GO" id="GO:0005524">
    <property type="term" value="F:ATP binding"/>
    <property type="evidence" value="ECO:0007669"/>
    <property type="project" value="UniProtKB-UniRule"/>
</dbReference>
<dbReference type="GO" id="GO:0003921">
    <property type="term" value="F:GMP synthase activity"/>
    <property type="evidence" value="ECO:0007669"/>
    <property type="project" value="InterPro"/>
</dbReference>
<dbReference type="CDD" id="cd01742">
    <property type="entry name" value="GATase1_GMP_Synthase"/>
    <property type="match status" value="1"/>
</dbReference>
<dbReference type="CDD" id="cd01997">
    <property type="entry name" value="GMP_synthase_C"/>
    <property type="match status" value="1"/>
</dbReference>
<dbReference type="FunFam" id="3.30.300.10:FF:000002">
    <property type="entry name" value="GMP synthase [glutamine-hydrolyzing]"/>
    <property type="match status" value="1"/>
</dbReference>
<dbReference type="FunFam" id="3.40.50.620:FF:000001">
    <property type="entry name" value="GMP synthase [glutamine-hydrolyzing]"/>
    <property type="match status" value="1"/>
</dbReference>
<dbReference type="FunFam" id="3.40.50.880:FF:000001">
    <property type="entry name" value="GMP synthase [glutamine-hydrolyzing]"/>
    <property type="match status" value="1"/>
</dbReference>
<dbReference type="Gene3D" id="3.30.300.10">
    <property type="match status" value="1"/>
</dbReference>
<dbReference type="Gene3D" id="3.40.50.880">
    <property type="match status" value="1"/>
</dbReference>
<dbReference type="Gene3D" id="3.40.50.620">
    <property type="entry name" value="HUPs"/>
    <property type="match status" value="1"/>
</dbReference>
<dbReference type="HAMAP" id="MF_00344">
    <property type="entry name" value="GMP_synthase"/>
    <property type="match status" value="1"/>
</dbReference>
<dbReference type="InterPro" id="IPR029062">
    <property type="entry name" value="Class_I_gatase-like"/>
</dbReference>
<dbReference type="InterPro" id="IPR017926">
    <property type="entry name" value="GATASE"/>
</dbReference>
<dbReference type="InterPro" id="IPR001674">
    <property type="entry name" value="GMP_synth_C"/>
</dbReference>
<dbReference type="InterPro" id="IPR004739">
    <property type="entry name" value="GMP_synth_GATase"/>
</dbReference>
<dbReference type="InterPro" id="IPR022955">
    <property type="entry name" value="GMP_synthase"/>
</dbReference>
<dbReference type="InterPro" id="IPR025777">
    <property type="entry name" value="GMPS_ATP_PPase_dom"/>
</dbReference>
<dbReference type="InterPro" id="IPR022310">
    <property type="entry name" value="NAD/GMP_synthase"/>
</dbReference>
<dbReference type="InterPro" id="IPR014729">
    <property type="entry name" value="Rossmann-like_a/b/a_fold"/>
</dbReference>
<dbReference type="NCBIfam" id="TIGR00884">
    <property type="entry name" value="guaA_Cterm"/>
    <property type="match status" value="1"/>
</dbReference>
<dbReference type="NCBIfam" id="TIGR00888">
    <property type="entry name" value="guaA_Nterm"/>
    <property type="match status" value="1"/>
</dbReference>
<dbReference type="NCBIfam" id="NF000848">
    <property type="entry name" value="PRK00074.1"/>
    <property type="match status" value="1"/>
</dbReference>
<dbReference type="PANTHER" id="PTHR11922:SF2">
    <property type="entry name" value="GMP SYNTHASE [GLUTAMINE-HYDROLYZING]"/>
    <property type="match status" value="1"/>
</dbReference>
<dbReference type="PANTHER" id="PTHR11922">
    <property type="entry name" value="GMP SYNTHASE-RELATED"/>
    <property type="match status" value="1"/>
</dbReference>
<dbReference type="Pfam" id="PF00117">
    <property type="entry name" value="GATase"/>
    <property type="match status" value="1"/>
</dbReference>
<dbReference type="Pfam" id="PF00958">
    <property type="entry name" value="GMP_synt_C"/>
    <property type="match status" value="1"/>
</dbReference>
<dbReference type="Pfam" id="PF02540">
    <property type="entry name" value="NAD_synthase"/>
    <property type="match status" value="1"/>
</dbReference>
<dbReference type="PRINTS" id="PR00097">
    <property type="entry name" value="ANTSNTHASEII"/>
</dbReference>
<dbReference type="PRINTS" id="PR00096">
    <property type="entry name" value="GATASE"/>
</dbReference>
<dbReference type="SUPFAM" id="SSF52402">
    <property type="entry name" value="Adenine nucleotide alpha hydrolases-like"/>
    <property type="match status" value="1"/>
</dbReference>
<dbReference type="SUPFAM" id="SSF52317">
    <property type="entry name" value="Class I glutamine amidotransferase-like"/>
    <property type="match status" value="1"/>
</dbReference>
<dbReference type="SUPFAM" id="SSF54810">
    <property type="entry name" value="GMP synthetase C-terminal dimerisation domain"/>
    <property type="match status" value="1"/>
</dbReference>
<dbReference type="PROSITE" id="PS51273">
    <property type="entry name" value="GATASE_TYPE_1"/>
    <property type="match status" value="1"/>
</dbReference>
<dbReference type="PROSITE" id="PS51553">
    <property type="entry name" value="GMPS_ATP_PPASE"/>
    <property type="match status" value="1"/>
</dbReference>
<feature type="chain" id="PRO_1000120307" description="GMP synthase [glutamine-hydrolyzing]">
    <location>
        <begin position="1"/>
        <end position="516"/>
    </location>
</feature>
<feature type="domain" description="Glutamine amidotransferase type-1" evidence="1">
    <location>
        <begin position="8"/>
        <end position="198"/>
    </location>
</feature>
<feature type="domain" description="GMPS ATP-PPase" evidence="1">
    <location>
        <begin position="199"/>
        <end position="391"/>
    </location>
</feature>
<feature type="active site" description="Nucleophile" evidence="1">
    <location>
        <position position="84"/>
    </location>
</feature>
<feature type="active site" evidence="1">
    <location>
        <position position="172"/>
    </location>
</feature>
<feature type="active site" evidence="1">
    <location>
        <position position="174"/>
    </location>
</feature>
<feature type="binding site" evidence="1">
    <location>
        <begin position="226"/>
        <end position="232"/>
    </location>
    <ligand>
        <name>ATP</name>
        <dbReference type="ChEBI" id="CHEBI:30616"/>
    </ligand>
</feature>
<proteinExistence type="inferred from homology"/>
<name>GUAA_FRATW</name>
<gene>
    <name evidence="1" type="primary">guaA</name>
    <name type="ordered locus">FTW_0926</name>
</gene>
<comment type="function">
    <text evidence="1">Catalyzes the synthesis of GMP from XMP.</text>
</comment>
<comment type="catalytic activity">
    <reaction evidence="1">
        <text>XMP + L-glutamine + ATP + H2O = GMP + L-glutamate + AMP + diphosphate + 2 H(+)</text>
        <dbReference type="Rhea" id="RHEA:11680"/>
        <dbReference type="ChEBI" id="CHEBI:15377"/>
        <dbReference type="ChEBI" id="CHEBI:15378"/>
        <dbReference type="ChEBI" id="CHEBI:29985"/>
        <dbReference type="ChEBI" id="CHEBI:30616"/>
        <dbReference type="ChEBI" id="CHEBI:33019"/>
        <dbReference type="ChEBI" id="CHEBI:57464"/>
        <dbReference type="ChEBI" id="CHEBI:58115"/>
        <dbReference type="ChEBI" id="CHEBI:58359"/>
        <dbReference type="ChEBI" id="CHEBI:456215"/>
        <dbReference type="EC" id="6.3.5.2"/>
    </reaction>
</comment>
<comment type="pathway">
    <text evidence="1">Purine metabolism; GMP biosynthesis; GMP from XMP (L-Gln route): step 1/1.</text>
</comment>
<comment type="subunit">
    <text evidence="1">Homodimer.</text>
</comment>
<accession>A4IXW6</accession>
<reference key="1">
    <citation type="journal article" date="2007" name="PLoS ONE">
        <title>Complete genomic characterization of a pathogenic A.II strain of Francisella tularensis subspecies tularensis.</title>
        <authorList>
            <person name="Beckstrom-Sternberg S.M."/>
            <person name="Auerbach R.K."/>
            <person name="Godbole S."/>
            <person name="Pearson J.V."/>
            <person name="Beckstrom-Sternberg J.S."/>
            <person name="Deng Z."/>
            <person name="Munk C."/>
            <person name="Kubota K."/>
            <person name="Zhou Y."/>
            <person name="Bruce D."/>
            <person name="Noronha J."/>
            <person name="Scheuermann R.H."/>
            <person name="Wang A."/>
            <person name="Wei X."/>
            <person name="Wang J."/>
            <person name="Hao J."/>
            <person name="Wagner D.M."/>
            <person name="Brettin T.S."/>
            <person name="Brown N."/>
            <person name="Gilna P."/>
            <person name="Keim P.S."/>
        </authorList>
    </citation>
    <scope>NUCLEOTIDE SEQUENCE [LARGE SCALE GENOMIC DNA]</scope>
    <source>
        <strain>WY96-3418</strain>
    </source>
</reference>
<organism>
    <name type="scientific">Francisella tularensis subsp. tularensis (strain WY96-3418)</name>
    <dbReference type="NCBI Taxonomy" id="418136"/>
    <lineage>
        <taxon>Bacteria</taxon>
        <taxon>Pseudomonadati</taxon>
        <taxon>Pseudomonadota</taxon>
        <taxon>Gammaproteobacteria</taxon>
        <taxon>Thiotrichales</taxon>
        <taxon>Francisellaceae</taxon>
        <taxon>Francisella</taxon>
    </lineage>
</organism>